<keyword id="KW-0021">Allosteric enzyme</keyword>
<keyword id="KW-0067">ATP-binding</keyword>
<keyword id="KW-0963">Cytoplasm</keyword>
<keyword id="KW-0324">Glycolysis</keyword>
<keyword id="KW-0418">Kinase</keyword>
<keyword id="KW-0460">Magnesium</keyword>
<keyword id="KW-0479">Metal-binding</keyword>
<keyword id="KW-0547">Nucleotide-binding</keyword>
<keyword id="KW-0808">Transferase</keyword>
<dbReference type="EC" id="2.7.1.11" evidence="1"/>
<dbReference type="EMBL" id="AE017244">
    <property type="protein sequence ID" value="AAZ53486.1"/>
    <property type="molecule type" value="Genomic_DNA"/>
</dbReference>
<dbReference type="RefSeq" id="WP_011290014.1">
    <property type="nucleotide sequence ID" value="NC_007332.1"/>
</dbReference>
<dbReference type="SMR" id="Q4A8Q3"/>
<dbReference type="KEGG" id="mhp:MHP7448_0111"/>
<dbReference type="HOGENOM" id="CLU_020655_0_1_14"/>
<dbReference type="UniPathway" id="UPA00109">
    <property type="reaction ID" value="UER00182"/>
</dbReference>
<dbReference type="Proteomes" id="UP000000553">
    <property type="component" value="Chromosome"/>
</dbReference>
<dbReference type="GO" id="GO:0005945">
    <property type="term" value="C:6-phosphofructokinase complex"/>
    <property type="evidence" value="ECO:0007669"/>
    <property type="project" value="TreeGrafter"/>
</dbReference>
<dbReference type="GO" id="GO:0003872">
    <property type="term" value="F:6-phosphofructokinase activity"/>
    <property type="evidence" value="ECO:0007669"/>
    <property type="project" value="UniProtKB-UniRule"/>
</dbReference>
<dbReference type="GO" id="GO:0016208">
    <property type="term" value="F:AMP binding"/>
    <property type="evidence" value="ECO:0007669"/>
    <property type="project" value="TreeGrafter"/>
</dbReference>
<dbReference type="GO" id="GO:0005524">
    <property type="term" value="F:ATP binding"/>
    <property type="evidence" value="ECO:0007669"/>
    <property type="project" value="UniProtKB-KW"/>
</dbReference>
<dbReference type="GO" id="GO:0070095">
    <property type="term" value="F:fructose-6-phosphate binding"/>
    <property type="evidence" value="ECO:0007669"/>
    <property type="project" value="TreeGrafter"/>
</dbReference>
<dbReference type="GO" id="GO:0042802">
    <property type="term" value="F:identical protein binding"/>
    <property type="evidence" value="ECO:0007669"/>
    <property type="project" value="TreeGrafter"/>
</dbReference>
<dbReference type="GO" id="GO:0046872">
    <property type="term" value="F:metal ion binding"/>
    <property type="evidence" value="ECO:0007669"/>
    <property type="project" value="UniProtKB-KW"/>
</dbReference>
<dbReference type="GO" id="GO:0048029">
    <property type="term" value="F:monosaccharide binding"/>
    <property type="evidence" value="ECO:0007669"/>
    <property type="project" value="TreeGrafter"/>
</dbReference>
<dbReference type="GO" id="GO:0061621">
    <property type="term" value="P:canonical glycolysis"/>
    <property type="evidence" value="ECO:0007669"/>
    <property type="project" value="TreeGrafter"/>
</dbReference>
<dbReference type="GO" id="GO:0030388">
    <property type="term" value="P:fructose 1,6-bisphosphate metabolic process"/>
    <property type="evidence" value="ECO:0007669"/>
    <property type="project" value="TreeGrafter"/>
</dbReference>
<dbReference type="GO" id="GO:0006002">
    <property type="term" value="P:fructose 6-phosphate metabolic process"/>
    <property type="evidence" value="ECO:0007669"/>
    <property type="project" value="InterPro"/>
</dbReference>
<dbReference type="FunFam" id="3.40.50.460:FF:000002">
    <property type="entry name" value="ATP-dependent 6-phosphofructokinase"/>
    <property type="match status" value="1"/>
</dbReference>
<dbReference type="Gene3D" id="3.40.50.450">
    <property type="match status" value="1"/>
</dbReference>
<dbReference type="Gene3D" id="3.40.50.460">
    <property type="entry name" value="Phosphofructokinase domain"/>
    <property type="match status" value="1"/>
</dbReference>
<dbReference type="HAMAP" id="MF_00339">
    <property type="entry name" value="Phosphofructokinase_I_B1"/>
    <property type="match status" value="1"/>
</dbReference>
<dbReference type="InterPro" id="IPR022953">
    <property type="entry name" value="ATP_PFK"/>
</dbReference>
<dbReference type="InterPro" id="IPR012003">
    <property type="entry name" value="ATP_PFK_prok-type"/>
</dbReference>
<dbReference type="InterPro" id="IPR012828">
    <property type="entry name" value="PFKA_ATP_prok"/>
</dbReference>
<dbReference type="InterPro" id="IPR015912">
    <property type="entry name" value="Phosphofructokinase_CS"/>
</dbReference>
<dbReference type="InterPro" id="IPR000023">
    <property type="entry name" value="Phosphofructokinase_dom"/>
</dbReference>
<dbReference type="InterPro" id="IPR035966">
    <property type="entry name" value="PKF_sf"/>
</dbReference>
<dbReference type="NCBIfam" id="TIGR02482">
    <property type="entry name" value="PFKA_ATP"/>
    <property type="match status" value="1"/>
</dbReference>
<dbReference type="NCBIfam" id="NF002872">
    <property type="entry name" value="PRK03202.1"/>
    <property type="match status" value="1"/>
</dbReference>
<dbReference type="PANTHER" id="PTHR13697:SF4">
    <property type="entry name" value="ATP-DEPENDENT 6-PHOSPHOFRUCTOKINASE"/>
    <property type="match status" value="1"/>
</dbReference>
<dbReference type="PANTHER" id="PTHR13697">
    <property type="entry name" value="PHOSPHOFRUCTOKINASE"/>
    <property type="match status" value="1"/>
</dbReference>
<dbReference type="Pfam" id="PF00365">
    <property type="entry name" value="PFK"/>
    <property type="match status" value="1"/>
</dbReference>
<dbReference type="PIRSF" id="PIRSF000532">
    <property type="entry name" value="ATP_PFK_prok"/>
    <property type="match status" value="1"/>
</dbReference>
<dbReference type="PRINTS" id="PR00476">
    <property type="entry name" value="PHFRCTKINASE"/>
</dbReference>
<dbReference type="SUPFAM" id="SSF53784">
    <property type="entry name" value="Phosphofructokinase"/>
    <property type="match status" value="1"/>
</dbReference>
<dbReference type="PROSITE" id="PS00433">
    <property type="entry name" value="PHOSPHOFRUCTOKINASE"/>
    <property type="match status" value="1"/>
</dbReference>
<reference key="1">
    <citation type="journal article" date="2005" name="J. Bacteriol.">
        <title>Swine and poultry pathogens: the complete genome sequences of two strains of Mycoplasma hyopneumoniae and a strain of Mycoplasma synoviae.</title>
        <authorList>
            <person name="Vasconcelos A.T.R."/>
            <person name="Ferreira H.B."/>
            <person name="Bizarro C.V."/>
            <person name="Bonatto S.L."/>
            <person name="Carvalho M.O."/>
            <person name="Pinto P.M."/>
            <person name="Almeida D.F."/>
            <person name="Almeida L.G.P."/>
            <person name="Almeida R."/>
            <person name="Alves-Junior L."/>
            <person name="Assuncao E.N."/>
            <person name="Azevedo V.A.C."/>
            <person name="Bogo M.R."/>
            <person name="Brigido M.M."/>
            <person name="Brocchi M."/>
            <person name="Burity H.A."/>
            <person name="Camargo A.A."/>
            <person name="Camargo S.S."/>
            <person name="Carepo M.S."/>
            <person name="Carraro D.M."/>
            <person name="de Mattos Cascardo J.C."/>
            <person name="Castro L.A."/>
            <person name="Cavalcanti G."/>
            <person name="Chemale G."/>
            <person name="Collevatti R.G."/>
            <person name="Cunha C.W."/>
            <person name="Dallagiovanna B."/>
            <person name="Dambros B.P."/>
            <person name="Dellagostin O.A."/>
            <person name="Falcao C."/>
            <person name="Fantinatti-Garboggini F."/>
            <person name="Felipe M.S.S."/>
            <person name="Fiorentin L."/>
            <person name="Franco G.R."/>
            <person name="Freitas N.S.A."/>
            <person name="Frias D."/>
            <person name="Grangeiro T.B."/>
            <person name="Grisard E.C."/>
            <person name="Guimaraes C.T."/>
            <person name="Hungria M."/>
            <person name="Jardim S.N."/>
            <person name="Krieger M.A."/>
            <person name="Laurino J.P."/>
            <person name="Lima L.F.A."/>
            <person name="Lopes M.I."/>
            <person name="Loreto E.L.S."/>
            <person name="Madeira H.M.F."/>
            <person name="Manfio G.P."/>
            <person name="Maranhao A.Q."/>
            <person name="Martinkovics C.T."/>
            <person name="Medeiros S.R.B."/>
            <person name="Moreira M.A.M."/>
            <person name="Neiva M."/>
            <person name="Ramalho-Neto C.E."/>
            <person name="Nicolas M.F."/>
            <person name="Oliveira S.C."/>
            <person name="Paixao R.F.C."/>
            <person name="Pedrosa F.O."/>
            <person name="Pena S.D.J."/>
            <person name="Pereira M."/>
            <person name="Pereira-Ferrari L."/>
            <person name="Piffer I."/>
            <person name="Pinto L.S."/>
            <person name="Potrich D.P."/>
            <person name="Salim A.C.M."/>
            <person name="Santos F.R."/>
            <person name="Schmitt R."/>
            <person name="Schneider M.P.C."/>
            <person name="Schrank A."/>
            <person name="Schrank I.S."/>
            <person name="Schuck A.F."/>
            <person name="Seuanez H.N."/>
            <person name="Silva D.W."/>
            <person name="Silva R."/>
            <person name="Silva S.C."/>
            <person name="Soares C.M.A."/>
            <person name="Souza K.R.L."/>
            <person name="Souza R.C."/>
            <person name="Staats C.C."/>
            <person name="Steffens M.B.R."/>
            <person name="Teixeira S.M.R."/>
            <person name="Urmenyi T.P."/>
            <person name="Vainstein M.H."/>
            <person name="Zuccherato L.W."/>
            <person name="Simpson A.J.G."/>
            <person name="Zaha A."/>
        </authorList>
    </citation>
    <scope>NUCLEOTIDE SEQUENCE [LARGE SCALE GENOMIC DNA]</scope>
    <source>
        <strain>7448</strain>
    </source>
</reference>
<protein>
    <recommendedName>
        <fullName evidence="1">ATP-dependent 6-phosphofructokinase</fullName>
        <shortName evidence="1">ATP-PFK</shortName>
        <shortName evidence="1">Phosphofructokinase</shortName>
        <ecNumber evidence="1">2.7.1.11</ecNumber>
    </recommendedName>
    <alternativeName>
        <fullName evidence="1">Phosphohexokinase</fullName>
    </alternativeName>
</protein>
<evidence type="ECO:0000255" key="1">
    <source>
        <dbReference type="HAMAP-Rule" id="MF_00339"/>
    </source>
</evidence>
<comment type="function">
    <text evidence="1">Catalyzes the phosphorylation of D-fructose 6-phosphate to fructose 1,6-bisphosphate by ATP, the first committing step of glycolysis.</text>
</comment>
<comment type="catalytic activity">
    <reaction evidence="1">
        <text>beta-D-fructose 6-phosphate + ATP = beta-D-fructose 1,6-bisphosphate + ADP + H(+)</text>
        <dbReference type="Rhea" id="RHEA:16109"/>
        <dbReference type="ChEBI" id="CHEBI:15378"/>
        <dbReference type="ChEBI" id="CHEBI:30616"/>
        <dbReference type="ChEBI" id="CHEBI:32966"/>
        <dbReference type="ChEBI" id="CHEBI:57634"/>
        <dbReference type="ChEBI" id="CHEBI:456216"/>
        <dbReference type="EC" id="2.7.1.11"/>
    </reaction>
</comment>
<comment type="cofactor">
    <cofactor evidence="1">
        <name>Mg(2+)</name>
        <dbReference type="ChEBI" id="CHEBI:18420"/>
    </cofactor>
</comment>
<comment type="activity regulation">
    <text evidence="1">Allosterically activated by ADP and other diphosphonucleosides, and allosterically inhibited by phosphoenolpyruvate.</text>
</comment>
<comment type="pathway">
    <text evidence="1">Carbohydrate degradation; glycolysis; D-glyceraldehyde 3-phosphate and glycerone phosphate from D-glucose: step 3/4.</text>
</comment>
<comment type="subunit">
    <text evidence="1">Homotetramer.</text>
</comment>
<comment type="subcellular location">
    <subcellularLocation>
        <location evidence="1">Cytoplasm</location>
    </subcellularLocation>
</comment>
<comment type="similarity">
    <text evidence="1">Belongs to the phosphofructokinase type A (PFKA) family. ATP-dependent PFK group I subfamily. Prokaryotic clade 'B1' sub-subfamily.</text>
</comment>
<proteinExistence type="inferred from homology"/>
<organism>
    <name type="scientific">Mesomycoplasma hyopneumoniae (strain 7448)</name>
    <name type="common">Mycoplasma hyopneumoniae</name>
    <dbReference type="NCBI Taxonomy" id="262722"/>
    <lineage>
        <taxon>Bacteria</taxon>
        <taxon>Bacillati</taxon>
        <taxon>Mycoplasmatota</taxon>
        <taxon>Mycoplasmoidales</taxon>
        <taxon>Metamycoplasmataceae</taxon>
        <taxon>Mesomycoplasma</taxon>
    </lineage>
</organism>
<sequence length="322" mass="34953">MSKKIGILTSGGDAPGMNSAISFLTKSALSLGFEPYLIFDGYSGIIARKILPAKNFPYNGISSFGGTAIGSSRFPEFKKEEVQNKAVEILSEIGISSLVVVGGDGTYNGGYKLHLKGIKVIALPGTIDNDIQFTDYTIGFDTALNTIVETIDKLRDTANSHRRCFVVEVMGRHCQDLALYSAMATGSEILITNTNILSPEEVSQKVLEQFAKGKPSVIVTITENILPNLKEFAAKIEELTKISTRSLEVGHTQRGGRPSAFDRILAAKMAMKAMELINQDKSGLAISYLDGKIQTFDIAKVVSNPVRKTNDLVLEINKINQN</sequence>
<gene>
    <name evidence="1" type="primary">pfkA</name>
    <name type="ordered locus">MHP7448_0111</name>
</gene>
<accession>Q4A8Q3</accession>
<name>PFKA_MESH7</name>
<feature type="chain" id="PRO_1000059780" description="ATP-dependent 6-phosphofructokinase">
    <location>
        <begin position="1"/>
        <end position="322"/>
    </location>
</feature>
<feature type="active site" description="Proton acceptor" evidence="1">
    <location>
        <position position="128"/>
    </location>
</feature>
<feature type="binding site" evidence="1">
    <location>
        <position position="12"/>
    </location>
    <ligand>
        <name>ATP</name>
        <dbReference type="ChEBI" id="CHEBI:30616"/>
    </ligand>
</feature>
<feature type="binding site" evidence="1">
    <location>
        <begin position="73"/>
        <end position="74"/>
    </location>
    <ligand>
        <name>ATP</name>
        <dbReference type="ChEBI" id="CHEBI:30616"/>
    </ligand>
</feature>
<feature type="binding site" evidence="1">
    <location>
        <begin position="103"/>
        <end position="106"/>
    </location>
    <ligand>
        <name>ATP</name>
        <dbReference type="ChEBI" id="CHEBI:30616"/>
    </ligand>
</feature>
<feature type="binding site" evidence="1">
    <location>
        <position position="104"/>
    </location>
    <ligand>
        <name>Mg(2+)</name>
        <dbReference type="ChEBI" id="CHEBI:18420"/>
        <note>catalytic</note>
    </ligand>
</feature>
<feature type="binding site" description="in other chain" evidence="1">
    <location>
        <begin position="126"/>
        <end position="128"/>
    </location>
    <ligand>
        <name>substrate</name>
        <note>ligand shared between dimeric partners</note>
    </ligand>
</feature>
<feature type="binding site" evidence="1">
    <location>
        <position position="155"/>
    </location>
    <ligand>
        <name>ADP</name>
        <dbReference type="ChEBI" id="CHEBI:456216"/>
        <note>allosteric activator</note>
    </ligand>
</feature>
<feature type="binding site" evidence="1">
    <location>
        <position position="163"/>
    </location>
    <ligand>
        <name>substrate</name>
        <note>ligand shared between dimeric partners</note>
    </ligand>
</feature>
<feature type="binding site" description="in other chain" evidence="1">
    <location>
        <begin position="170"/>
        <end position="172"/>
    </location>
    <ligand>
        <name>substrate</name>
        <note>ligand shared between dimeric partners</note>
    </ligand>
</feature>
<feature type="binding site" evidence="1">
    <location>
        <begin position="186"/>
        <end position="188"/>
    </location>
    <ligand>
        <name>ADP</name>
        <dbReference type="ChEBI" id="CHEBI:456216"/>
        <note>allosteric activator</note>
    </ligand>
</feature>
<feature type="binding site" evidence="1">
    <location>
        <position position="212"/>
    </location>
    <ligand>
        <name>ADP</name>
        <dbReference type="ChEBI" id="CHEBI:456216"/>
        <note>allosteric activator</note>
    </ligand>
</feature>
<feature type="binding site" evidence="1">
    <location>
        <begin position="214"/>
        <end position="216"/>
    </location>
    <ligand>
        <name>ADP</name>
        <dbReference type="ChEBI" id="CHEBI:456216"/>
        <note>allosteric activator</note>
    </ligand>
</feature>
<feature type="binding site" description="in other chain" evidence="1">
    <location>
        <position position="223"/>
    </location>
    <ligand>
        <name>substrate</name>
        <note>ligand shared between dimeric partners</note>
    </ligand>
</feature>
<feature type="binding site" evidence="1">
    <location>
        <position position="245"/>
    </location>
    <ligand>
        <name>substrate</name>
        <note>ligand shared between dimeric partners</note>
    </ligand>
</feature>
<feature type="binding site" description="in other chain" evidence="1">
    <location>
        <begin position="251"/>
        <end position="254"/>
    </location>
    <ligand>
        <name>substrate</name>
        <note>ligand shared between dimeric partners</note>
    </ligand>
</feature>